<keyword id="KW-0067">ATP-binding</keyword>
<keyword id="KW-0191">Covalent protein-RNA linkage</keyword>
<keyword id="KW-0235">DNA replication</keyword>
<keyword id="KW-0347">Helicase</keyword>
<keyword id="KW-1043">Host membrane</keyword>
<keyword id="KW-0378">Hydrolase</keyword>
<keyword id="KW-0472">Membrane</keyword>
<keyword id="KW-0547">Nucleotide-binding</keyword>
<keyword id="KW-0548">Nucleotidyltransferase</keyword>
<keyword id="KW-0597">Phosphoprotein</keyword>
<keyword id="KW-0645">Protease</keyword>
<keyword id="KW-1185">Reference proteome</keyword>
<keyword id="KW-0696">RNA-directed RNA polymerase</keyword>
<keyword id="KW-0788">Thiol protease</keyword>
<keyword id="KW-0808">Transferase</keyword>
<keyword id="KW-0812">Transmembrane</keyword>
<keyword id="KW-1133">Transmembrane helix</keyword>
<keyword id="KW-0693">Viral RNA replication</keyword>
<protein>
    <recommendedName>
        <fullName>RNA1 polyprotein</fullName>
    </recommendedName>
    <component>
        <recommendedName>
            <fullName>Protease-cofactor</fullName>
        </recommendedName>
    </component>
    <component>
        <recommendedName>
            <fullName>Putative helicase</fullName>
            <ecNumber>3.6.4.-</ecNumber>
        </recommendedName>
    </component>
    <component>
        <recommendedName>
            <fullName>Picornain 3C-like protease</fullName>
            <shortName>3C-like protease</shortName>
            <ecNumber>3.4.22.-</ecNumber>
        </recommendedName>
    </component>
    <component>
        <recommendedName>
            <fullName>RNA-directed RNA polymerase</fullName>
            <ecNumber>2.7.7.48</ecNumber>
        </recommendedName>
    </component>
</protein>
<feature type="propeptide" id="PRO_0000441104" description="Removed in mature form" evidence="6">
    <location>
        <begin position="1"/>
        <end position="105"/>
    </location>
</feature>
<feature type="chain" id="PRO_5000214031" description="Protease-cofactor" evidence="2">
    <location>
        <begin position="106"/>
        <end position="338" status="uncertain"/>
    </location>
</feature>
<feature type="chain" id="PRO_5000214032" description="Putative helicase" evidence="2">
    <location>
        <begin position="339" status="uncertain"/>
        <end position="860" status="uncertain"/>
    </location>
</feature>
<feature type="chain" id="PRO_5000214033" description="Picornain 3C-like protease" evidence="2">
    <location>
        <begin position="861" status="uncertain"/>
        <end position="1103" status="uncertain"/>
    </location>
</feature>
<feature type="chain" id="PRO_5000214034" description="RNA-directed RNA polymerase" evidence="2">
    <location>
        <begin position="1104" status="uncertain"/>
        <end position="2158"/>
    </location>
</feature>
<feature type="transmembrane region" description="Helical" evidence="2">
    <location>
        <begin position="801"/>
        <end position="821"/>
    </location>
</feature>
<feature type="domain" description="SF3 helicase" evidence="4">
    <location>
        <begin position="367"/>
        <end position="534"/>
    </location>
</feature>
<feature type="domain" description="Peptidase C3" evidence="5">
    <location>
        <begin position="870"/>
        <end position="1083"/>
    </location>
</feature>
<feature type="domain" description="RdRp catalytic" evidence="3">
    <location>
        <begin position="1376"/>
        <end position="1511"/>
    </location>
</feature>
<feature type="active site" description="For picornain 3C-like protease activity" evidence="5">
    <location>
        <position position="910"/>
    </location>
</feature>
<feature type="active site" description="For picornain 3C-like protease activity" evidence="5">
    <location>
        <position position="946"/>
    </location>
</feature>
<feature type="active site" description="For picornain 3C-like protease activity" evidence="5">
    <location>
        <position position="1041"/>
    </location>
</feature>
<feature type="binding site" evidence="4">
    <location>
        <begin position="393"/>
        <end position="400"/>
    </location>
    <ligand>
        <name>ATP</name>
        <dbReference type="ChEBI" id="CHEBI:30616"/>
    </ligand>
</feature>
<feature type="site" description="Cleavage" evidence="2">
    <location>
        <begin position="338"/>
        <end position="339"/>
    </location>
</feature>
<feature type="site" description="Cleavage" evidence="2">
    <location>
        <begin position="860"/>
        <end position="861"/>
    </location>
</feature>
<feature type="site" description="Cleavage" evidence="2">
    <location>
        <begin position="1103"/>
        <end position="1104"/>
    </location>
</feature>
<feature type="modified residue" description="O-(5'-phospho-RNA)-serine" evidence="1">
    <location>
        <position position="844"/>
    </location>
</feature>
<comment type="function">
    <text evidence="1">Picornain 3C-like protease is a thiol protease that probably cleaves the polyprotein.</text>
</comment>
<comment type="catalytic activity">
    <reaction evidence="3">
        <text>RNA(n) + a ribonucleoside 5'-triphosphate = RNA(n+1) + diphosphate</text>
        <dbReference type="Rhea" id="RHEA:21248"/>
        <dbReference type="Rhea" id="RHEA-COMP:14527"/>
        <dbReference type="Rhea" id="RHEA-COMP:17342"/>
        <dbReference type="ChEBI" id="CHEBI:33019"/>
        <dbReference type="ChEBI" id="CHEBI:61557"/>
        <dbReference type="ChEBI" id="CHEBI:140395"/>
        <dbReference type="EC" id="2.7.7.48"/>
    </reaction>
</comment>
<comment type="subcellular location">
    <molecule>Putative helicase</molecule>
    <subcellularLocation>
        <location evidence="6">Host membrane</location>
        <topology evidence="6">Single-pass membrane protein</topology>
    </subcellularLocation>
</comment>
<name>POL1_TOTV</name>
<accession>A1XIP9</accession>
<sequence length="2158" mass="241087">MSFSKMFPGFNSVTEKCATSSSGSFFSELTASISNFSRTLSNVTKVSSQISSHIEDLKPSVTDAASSFTSTCNSVTKLLDKIMTLIEPFIKAYSFVASMYKSICDMVAKIVASIKDKFTLGFNWVLDKSEDVDVLVIAFLIFAISMLIIVFICPSSVLDGVVQMTHIVFNTVGNFFSALYKLDWLPTWSQKFSMMAQANVLPGESMSHSPLSQVVASLIAFGISTLVFVAVPGRPNGLSNPLSKILYSAGSGAQQCNQLFTLFRNMKDCTSQAFSWVLEIIVDIFGFKNPVLSAISATLSTDLFTWMEEVDAVCDPAHRLENFANPAFTIKLQHLREQALKISAYIATHPVAAFMSHRVTAAIXHLDKIYGENCQHTGVGQYRAEPFMVQWYGASGCGKSTSMRLFINDVLDRMEEPKLNRLYAVSKRDAYWSNYAHQTAILMDDMGALRDGAGQCQDIKDLIDIKSTQPAPLPMAAVEDKGRHFTSRYIFATSNLISAPAQCGLTYPDAFERRRDVLVECRKVGEFNTDAPTSHLEFDVVESKRPHAITHRGLSYDDLLEYVVAKCKVHAEISGKLYGATSGKVAQVDVSPEEIIASMDMLNIQDTKQDAKLPVVVVSEEDRVAYSQELTVEALKYAYQGSLNPAAYFPHDMHKQAIFDVLSESAKETFTRWVNDMLYQGCCNENYRWLIKNIPADYIMHFKSFIYASTINERSFDVQKQLPDGMAHRAIDADVDTLICVEQMPAHVQFLYTAFVRYWCRRKMEQPRQSWVVVCYHSIVDYIKNAWYDLPYILRVLIKAGLILIALNGAFGAVTAFCACWQSNTFPSAEGRGGITNESNSISSRKNKGKSIFARSLLAQAKGDMLEKWASDDGFINEGLKKNLVVLRLGEGVYFRGTYVCSGWVMTVAHAFSSLRDGTTFSIIHAQSISKVQYNAKTARFLKEQDIVLLNVGNPDGPKPDIRKHFPVRDGVCFSKGTQGVCVRAVASKDASQGNLEYLRFNVMMSKGYLEKVTYQMDSSSFKLESQASYEYHMNGENGDCGTLLLLPNVQDKQPCIVGIHCASYDEEAAHKGFVASNATAIFRDQLEDLPTGPVKVAMVRCQLLKDLRARDAALFEEKQVAFVGTLPAEQAATVPHKTTLRRSGLFEAFGPAETAPSIISASDKRGEGFDPYVAGIQKYNETAQNFDEDIARLAYEGLRQAILPVLHSQRVPFGKPVTQNEDVVLNGVDGFDYFDGMELSTSCGYPYNKLGMGTSKREFVEPSGDGDRVQLKRTTPIFDDWEALDVEIRKGNFVELVTTQCAKDERLPLEKVFGKRKTRLFEILPFHYNMLVRKYFLDFSASLMASHNALPCKVGINPGGIEWTLLANGFRAVSDTGFSADYSSFDGRAPIFAFQWFCDLVDDYYGSPPGSPDSNARHVLLMMASCHYTICENKVFRLVGGMPSGFALTVIFNSLLNEFYMRYAFISLLRRPHIAAQAIGCKPSDFNKLFVAVYGDDNLVAVPMELHWYTLPAIAQELEMVNVIIKNGIDKNMDVSSSKMLDLSELTFLSRGFKRHRLGYVQAPLKWVSIIEPMYWIRPSVGCPDALAMLENIDTGVREAFHHGPQVFEKLVTDVQNALKERCFPATTFPTYFELEQDWLVEVTGNPAIGLIKELHIAASAFVPLPPGNTVLNFSDGVHTFADRVSFCSSRTAAAQQWDTTTVLVNCTGAKRPTWVRGPTTWRDFEGLIWPYTMAAIKDHICSIVTKGVTKPHVVFVCGNGYAIGPVCAALYCLSTGQYSSQDVVVRLRTIADVTDLSQYPGGCAKYLLKCADTREEELADTCKIAQAKGETPAYIPQGGFSLGNFRIVQGRIDLQLAQRLPFTVGPYGGWGQHTTRELKLLLKDMEKIYQILVQRESFITLYFDYLSSEQVMLLVDFLRLQGFFPRQNDVDYLLKAFKLSKQRHNKENCHTVYFRKPFLSRKMTMGSKEILSATAAESLFGMDVSANVLKSRLLHLQKPIKCSSMELAFKIYCVIQGHLSKEVVTHFQRMYQQDLTEGIIEKVILWLTATLSESFPVDLVDVPLGLDNIEIQDKGFSLNPNNINMNACDAILFQLTECYNRSTKKHVFCRYTTASSLVVAYVLAHRHQTIDELPSFYATHPDVLLLTPILTGYKAP</sequence>
<evidence type="ECO:0000250" key="1"/>
<evidence type="ECO:0000255" key="2"/>
<evidence type="ECO:0000255" key="3">
    <source>
        <dbReference type="PROSITE-ProRule" id="PRU00539"/>
    </source>
</evidence>
<evidence type="ECO:0000255" key="4">
    <source>
        <dbReference type="PROSITE-ProRule" id="PRU00551"/>
    </source>
</evidence>
<evidence type="ECO:0000255" key="5">
    <source>
        <dbReference type="PROSITE-ProRule" id="PRU01222"/>
    </source>
</evidence>
<evidence type="ECO:0000305" key="6"/>
<reference key="1">
    <citation type="journal article" date="2007" name="Arch. Virol.">
        <title>Identification and characterisation of tomato torrado virus, a new plant picorna-like virus from tomato.</title>
        <authorList>
            <person name="Verbeek M."/>
            <person name="Dullemans A.M."/>
            <person name="van den Heuvel J.F."/>
            <person name="Maris P.C."/>
            <person name="van der Vlugt R.A."/>
        </authorList>
    </citation>
    <scope>NUCLEOTIDE SEQUENCE [GENOMIC RNA]</scope>
</reference>
<proteinExistence type="inferred from homology"/>
<organismHost>
    <name type="scientific">Capsicum annuum</name>
    <name type="common">Capsicum pepper</name>
    <dbReference type="NCBI Taxonomy" id="4072"/>
</organismHost>
<organismHost>
    <name type="scientific">Nicotiana tabacum</name>
    <name type="common">Common tobacco</name>
    <dbReference type="NCBI Taxonomy" id="4097"/>
</organismHost>
<organismHost>
    <name type="scientific">Solanum lycopersicum</name>
    <name type="common">Tomato</name>
    <name type="synonym">Lycopersicon esculentum</name>
    <dbReference type="NCBI Taxonomy" id="4081"/>
</organismHost>
<organismHost>
    <name type="scientific">Solanum melongena</name>
    <name type="common">eggplant</name>
    <dbReference type="NCBI Taxonomy" id="4111"/>
</organismHost>
<organismHost>
    <name type="scientific">Solanum tuberosum</name>
    <name type="common">Potato</name>
    <dbReference type="NCBI Taxonomy" id="4113"/>
</organismHost>
<organism>
    <name type="scientific">Tomato torrado virus (isolate Solanum lycopersicum/Spain/PRIToTV0301/-)</name>
    <name type="common">ToTV</name>
    <dbReference type="NCBI Taxonomy" id="686948"/>
    <lineage>
        <taxon>Viruses</taxon>
        <taxon>Riboviria</taxon>
        <taxon>Orthornavirae</taxon>
        <taxon>Pisuviricota</taxon>
        <taxon>Pisoniviricetes</taxon>
        <taxon>Picornavirales</taxon>
        <taxon>Secoviridae</taxon>
        <taxon>Torradovirus</taxon>
        <taxon>Torradovirus lycopersici</taxon>
    </lineage>
</organism>
<dbReference type="EC" id="3.6.4.-"/>
<dbReference type="EC" id="3.4.22.-"/>
<dbReference type="EC" id="2.7.7.48"/>
<dbReference type="EMBL" id="DQ388879">
    <property type="protein sequence ID" value="ABD38934.1"/>
    <property type="molecule type" value="Genomic_RNA"/>
</dbReference>
<dbReference type="RefSeq" id="YP_001039627.1">
    <property type="nucleotide sequence ID" value="NC_009013.1"/>
</dbReference>
<dbReference type="GeneID" id="5130563"/>
<dbReference type="KEGG" id="vg:5130563"/>
<dbReference type="Proteomes" id="UP000000825">
    <property type="component" value="Genome"/>
</dbReference>
<dbReference type="GO" id="GO:0033644">
    <property type="term" value="C:host cell membrane"/>
    <property type="evidence" value="ECO:0007669"/>
    <property type="project" value="UniProtKB-SubCell"/>
</dbReference>
<dbReference type="GO" id="GO:0016020">
    <property type="term" value="C:membrane"/>
    <property type="evidence" value="ECO:0007669"/>
    <property type="project" value="UniProtKB-KW"/>
</dbReference>
<dbReference type="GO" id="GO:0005524">
    <property type="term" value="F:ATP binding"/>
    <property type="evidence" value="ECO:0007669"/>
    <property type="project" value="UniProtKB-KW"/>
</dbReference>
<dbReference type="GO" id="GO:0004197">
    <property type="term" value="F:cysteine-type endopeptidase activity"/>
    <property type="evidence" value="ECO:0007669"/>
    <property type="project" value="InterPro"/>
</dbReference>
<dbReference type="GO" id="GO:0003723">
    <property type="term" value="F:RNA binding"/>
    <property type="evidence" value="ECO:0007669"/>
    <property type="project" value="InterPro"/>
</dbReference>
<dbReference type="GO" id="GO:0003724">
    <property type="term" value="F:RNA helicase activity"/>
    <property type="evidence" value="ECO:0007669"/>
    <property type="project" value="InterPro"/>
</dbReference>
<dbReference type="GO" id="GO:0003968">
    <property type="term" value="F:RNA-directed RNA polymerase activity"/>
    <property type="evidence" value="ECO:0007669"/>
    <property type="project" value="UniProtKB-KW"/>
</dbReference>
<dbReference type="GO" id="GO:0006260">
    <property type="term" value="P:DNA replication"/>
    <property type="evidence" value="ECO:0007669"/>
    <property type="project" value="UniProtKB-KW"/>
</dbReference>
<dbReference type="GO" id="GO:0006351">
    <property type="term" value="P:DNA-templated transcription"/>
    <property type="evidence" value="ECO:0007669"/>
    <property type="project" value="InterPro"/>
</dbReference>
<dbReference type="GO" id="GO:0006508">
    <property type="term" value="P:proteolysis"/>
    <property type="evidence" value="ECO:0007669"/>
    <property type="project" value="UniProtKB-KW"/>
</dbReference>
<dbReference type="GO" id="GO:0039694">
    <property type="term" value="P:viral RNA genome replication"/>
    <property type="evidence" value="ECO:0007669"/>
    <property type="project" value="InterPro"/>
</dbReference>
<dbReference type="CDD" id="cd23169">
    <property type="entry name" value="ps-ssRNAv-Picornavirales"/>
    <property type="match status" value="1"/>
</dbReference>
<dbReference type="Gene3D" id="1.20.960.20">
    <property type="match status" value="1"/>
</dbReference>
<dbReference type="Gene3D" id="3.30.70.270">
    <property type="match status" value="1"/>
</dbReference>
<dbReference type="Gene3D" id="2.40.10.10">
    <property type="entry name" value="Trypsin-like serine proteases"/>
    <property type="match status" value="1"/>
</dbReference>
<dbReference type="InterPro" id="IPR043502">
    <property type="entry name" value="DNA/RNA_pol_sf"/>
</dbReference>
<dbReference type="InterPro" id="IPR004004">
    <property type="entry name" value="Helic/Pol/Pept_Calicivir-typ"/>
</dbReference>
<dbReference type="InterPro" id="IPR000605">
    <property type="entry name" value="Helicase_SF3_ssDNA/RNA_vir"/>
</dbReference>
<dbReference type="InterPro" id="IPR014759">
    <property type="entry name" value="Helicase_SF3_ssRNA_vir"/>
</dbReference>
<dbReference type="InterPro" id="IPR044067">
    <property type="entry name" value="PCV_3C_PRO"/>
</dbReference>
<dbReference type="InterPro" id="IPR009003">
    <property type="entry name" value="Peptidase_S1_PA"/>
</dbReference>
<dbReference type="InterPro" id="IPR043504">
    <property type="entry name" value="Peptidase_S1_PA_chymotrypsin"/>
</dbReference>
<dbReference type="InterPro" id="IPR043128">
    <property type="entry name" value="Rev_trsase/Diguanyl_cyclase"/>
</dbReference>
<dbReference type="InterPro" id="IPR001205">
    <property type="entry name" value="RNA-dir_pol_C"/>
</dbReference>
<dbReference type="InterPro" id="IPR007094">
    <property type="entry name" value="RNA-dir_pol_PSvirus"/>
</dbReference>
<dbReference type="Pfam" id="PF00680">
    <property type="entry name" value="RdRP_1"/>
    <property type="match status" value="1"/>
</dbReference>
<dbReference type="Pfam" id="PF00910">
    <property type="entry name" value="RNA_helicase"/>
    <property type="match status" value="1"/>
</dbReference>
<dbReference type="PRINTS" id="PR00918">
    <property type="entry name" value="CALICVIRUSNS"/>
</dbReference>
<dbReference type="SUPFAM" id="SSF56672">
    <property type="entry name" value="DNA/RNA polymerases"/>
    <property type="match status" value="1"/>
</dbReference>
<dbReference type="SUPFAM" id="SSF50494">
    <property type="entry name" value="Trypsin-like serine proteases"/>
    <property type="match status" value="1"/>
</dbReference>
<dbReference type="PROSITE" id="PS51874">
    <property type="entry name" value="PCV_3C_PRO"/>
    <property type="match status" value="1"/>
</dbReference>
<dbReference type="PROSITE" id="PS50507">
    <property type="entry name" value="RDRP_SSRNA_POS"/>
    <property type="match status" value="1"/>
</dbReference>
<dbReference type="PROSITE" id="PS51218">
    <property type="entry name" value="SF3_HELICASE_2"/>
    <property type="match status" value="1"/>
</dbReference>